<accession>P57415</accession>
<proteinExistence type="inferred from homology"/>
<name>MURJ_BUCAI</name>
<feature type="chain" id="PRO_0000182000" description="Probable lipid II flippase MurJ">
    <location>
        <begin position="1"/>
        <end position="511"/>
    </location>
</feature>
<feature type="transmembrane region" description="Helical" evidence="1">
    <location>
        <begin position="25"/>
        <end position="45"/>
    </location>
</feature>
<feature type="transmembrane region" description="Helical" evidence="1">
    <location>
        <begin position="85"/>
        <end position="105"/>
    </location>
</feature>
<feature type="transmembrane region" description="Helical" evidence="1">
    <location>
        <begin position="133"/>
        <end position="153"/>
    </location>
</feature>
<feature type="transmembrane region" description="Helical" evidence="1">
    <location>
        <begin position="156"/>
        <end position="178"/>
    </location>
</feature>
<feature type="transmembrane region" description="Helical" evidence="1">
    <location>
        <begin position="245"/>
        <end position="265"/>
    </location>
</feature>
<feature type="transmembrane region" description="Helical" evidence="1">
    <location>
        <begin position="271"/>
        <end position="291"/>
    </location>
</feature>
<feature type="transmembrane region" description="Helical" evidence="1">
    <location>
        <begin position="315"/>
        <end position="335"/>
    </location>
</feature>
<feature type="transmembrane region" description="Helical" evidence="1">
    <location>
        <begin position="356"/>
        <end position="376"/>
    </location>
</feature>
<feature type="transmembrane region" description="Helical" evidence="1">
    <location>
        <begin position="400"/>
        <end position="420"/>
    </location>
</feature>
<feature type="transmembrane region" description="Helical" evidence="1">
    <location>
        <begin position="442"/>
        <end position="462"/>
    </location>
</feature>
<feature type="transmembrane region" description="Helical" evidence="1">
    <location>
        <begin position="481"/>
        <end position="501"/>
    </location>
</feature>
<gene>
    <name evidence="1" type="primary">murJ</name>
    <name type="synonym">mviN</name>
    <name type="ordered locus">BU333</name>
</gene>
<organism>
    <name type="scientific">Buchnera aphidicola subsp. Acyrthosiphon pisum (strain APS)</name>
    <name type="common">Acyrthosiphon pisum symbiotic bacterium</name>
    <dbReference type="NCBI Taxonomy" id="107806"/>
    <lineage>
        <taxon>Bacteria</taxon>
        <taxon>Pseudomonadati</taxon>
        <taxon>Pseudomonadota</taxon>
        <taxon>Gammaproteobacteria</taxon>
        <taxon>Enterobacterales</taxon>
        <taxon>Erwiniaceae</taxon>
        <taxon>Buchnera</taxon>
    </lineage>
</organism>
<sequence length="511" mass="58192">MNLLKPLISVSLMTLISRILGFVRDILIASIFGASMFTDAFFISFKIPNLLRRIFSDGTFSQAFIPVLMEYKSDKNEKNIKNFLSSILGFMSFFLLLLTILGGFFSQSIILIRAPGFLNPPEKLILSTNLLRIMFPYILLISLSSLCSSILNSWNYFSIPAFSPIFLNISIIFFSVFFSSFFCPSIIVLAWSVIIGGLVQLLYQLPFLYKINMLVLPNFHWNNIGLLRILKKMGPAILGASANQISLIINTIFSSLLNSGSISWIYYADRLIEFPVGILGVSLSTVLFTSLAKNYKNGIKLEYKKLLDWGLRISLIVSLPGSVILFFLAKPVIIVLFQYGKFTDFDVLMTARVLKLYSCGLISFIFVKILSSAFYACEEIKIPMKASLFTLLLNQLMNPFLIFYFQHAGIALSLSITSWVNFLLLSRKLYQRKIVSLQRSEFIFIIYIILATLVMIVILFVVLHMMSVWNIGTFINKIIRLFFGKYVSGITYLFMMNILGIRLLNFFYKNS</sequence>
<comment type="function">
    <text evidence="1">Involved in peptidoglycan biosynthesis. Transports lipid-linked peptidoglycan precursors from the inner to the outer leaflet of the cytoplasmic membrane.</text>
</comment>
<comment type="pathway">
    <text evidence="1">Cell wall biogenesis; peptidoglycan biosynthesis.</text>
</comment>
<comment type="subcellular location">
    <subcellularLocation>
        <location evidence="1">Cell inner membrane</location>
        <topology evidence="1">Multi-pass membrane protein</topology>
    </subcellularLocation>
</comment>
<comment type="similarity">
    <text evidence="1">Belongs to the MurJ/MviN family.</text>
</comment>
<dbReference type="EMBL" id="BA000003">
    <property type="protein sequence ID" value="BAB13038.1"/>
    <property type="molecule type" value="Genomic_DNA"/>
</dbReference>
<dbReference type="RefSeq" id="NP_240152.1">
    <property type="nucleotide sequence ID" value="NC_002528.1"/>
</dbReference>
<dbReference type="RefSeq" id="WP_010896072.1">
    <property type="nucleotide sequence ID" value="NC_002528.1"/>
</dbReference>
<dbReference type="SMR" id="P57415"/>
<dbReference type="STRING" id="563178.BUAP5A_327"/>
<dbReference type="EnsemblBacteria" id="BAB13038">
    <property type="protein sequence ID" value="BAB13038"/>
    <property type="gene ID" value="BAB13038"/>
</dbReference>
<dbReference type="KEGG" id="buc:BU333"/>
<dbReference type="PATRIC" id="fig|107806.10.peg.343"/>
<dbReference type="eggNOG" id="COG0728">
    <property type="taxonomic scope" value="Bacteria"/>
</dbReference>
<dbReference type="HOGENOM" id="CLU_006797_5_3_6"/>
<dbReference type="UniPathway" id="UPA00219"/>
<dbReference type="Proteomes" id="UP000001806">
    <property type="component" value="Chromosome"/>
</dbReference>
<dbReference type="GO" id="GO:0005886">
    <property type="term" value="C:plasma membrane"/>
    <property type="evidence" value="ECO:0007669"/>
    <property type="project" value="UniProtKB-SubCell"/>
</dbReference>
<dbReference type="GO" id="GO:0015648">
    <property type="term" value="F:lipid-linked peptidoglycan transporter activity"/>
    <property type="evidence" value="ECO:0007669"/>
    <property type="project" value="UniProtKB-UniRule"/>
</dbReference>
<dbReference type="GO" id="GO:0071555">
    <property type="term" value="P:cell wall organization"/>
    <property type="evidence" value="ECO:0007669"/>
    <property type="project" value="UniProtKB-KW"/>
</dbReference>
<dbReference type="GO" id="GO:0034204">
    <property type="term" value="P:lipid translocation"/>
    <property type="evidence" value="ECO:0007669"/>
    <property type="project" value="TreeGrafter"/>
</dbReference>
<dbReference type="GO" id="GO:0009252">
    <property type="term" value="P:peptidoglycan biosynthetic process"/>
    <property type="evidence" value="ECO:0007669"/>
    <property type="project" value="UniProtKB-UniRule"/>
</dbReference>
<dbReference type="GO" id="GO:0008360">
    <property type="term" value="P:regulation of cell shape"/>
    <property type="evidence" value="ECO:0007669"/>
    <property type="project" value="UniProtKB-KW"/>
</dbReference>
<dbReference type="CDD" id="cd13123">
    <property type="entry name" value="MATE_MurJ_like"/>
    <property type="match status" value="1"/>
</dbReference>
<dbReference type="HAMAP" id="MF_02078">
    <property type="entry name" value="MurJ_MviN"/>
    <property type="match status" value="1"/>
</dbReference>
<dbReference type="InterPro" id="IPR051050">
    <property type="entry name" value="Lipid_II_flippase_MurJ/MviN"/>
</dbReference>
<dbReference type="InterPro" id="IPR004268">
    <property type="entry name" value="MurJ"/>
</dbReference>
<dbReference type="NCBIfam" id="TIGR01695">
    <property type="entry name" value="murJ_mviN"/>
    <property type="match status" value="1"/>
</dbReference>
<dbReference type="PANTHER" id="PTHR47019">
    <property type="entry name" value="LIPID II FLIPPASE MURJ"/>
    <property type="match status" value="1"/>
</dbReference>
<dbReference type="PANTHER" id="PTHR47019:SF1">
    <property type="entry name" value="LIPID II FLIPPASE MURJ"/>
    <property type="match status" value="1"/>
</dbReference>
<dbReference type="Pfam" id="PF03023">
    <property type="entry name" value="MurJ"/>
    <property type="match status" value="1"/>
</dbReference>
<dbReference type="PIRSF" id="PIRSF002869">
    <property type="entry name" value="MviN"/>
    <property type="match status" value="1"/>
</dbReference>
<dbReference type="PRINTS" id="PR01806">
    <property type="entry name" value="VIRFACTRMVIN"/>
</dbReference>
<keyword id="KW-0997">Cell inner membrane</keyword>
<keyword id="KW-1003">Cell membrane</keyword>
<keyword id="KW-0133">Cell shape</keyword>
<keyword id="KW-0961">Cell wall biogenesis/degradation</keyword>
<keyword id="KW-0472">Membrane</keyword>
<keyword id="KW-0573">Peptidoglycan synthesis</keyword>
<keyword id="KW-1185">Reference proteome</keyword>
<keyword id="KW-0812">Transmembrane</keyword>
<keyword id="KW-1133">Transmembrane helix</keyword>
<keyword id="KW-0813">Transport</keyword>
<evidence type="ECO:0000255" key="1">
    <source>
        <dbReference type="HAMAP-Rule" id="MF_02078"/>
    </source>
</evidence>
<reference key="1">
    <citation type="journal article" date="2000" name="Nature">
        <title>Genome sequence of the endocellular bacterial symbiont of aphids Buchnera sp. APS.</title>
        <authorList>
            <person name="Shigenobu S."/>
            <person name="Watanabe H."/>
            <person name="Hattori M."/>
            <person name="Sakaki Y."/>
            <person name="Ishikawa H."/>
        </authorList>
    </citation>
    <scope>NUCLEOTIDE SEQUENCE [LARGE SCALE GENOMIC DNA]</scope>
    <source>
        <strain>APS</strain>
    </source>
</reference>
<protein>
    <recommendedName>
        <fullName evidence="1">Probable lipid II flippase MurJ</fullName>
    </recommendedName>
</protein>